<proteinExistence type="evidence at protein level"/>
<gene>
    <name type="primary">Espn</name>
</gene>
<reference key="1">
    <citation type="journal article" date="1996" name="J. Cell Sci.">
        <title>Identification and characterization of espin, an actin-binding protein localized to the F-actin-rich junctional plaques of Sertoli cell ectoplasmic specializations.</title>
        <authorList>
            <person name="Bartles J.R."/>
            <person name="Wierda A."/>
            <person name="Zheng L."/>
        </authorList>
    </citation>
    <scope>NUCLEOTIDE SEQUENCE [MRNA] (ISOFORM 1)</scope>
    <scope>PROTEIN SEQUENCE OF 20-39; 556-568; 662-684; 775-779 AND 820-822</scope>
    <scope>INTERACTION WITH F-ACTIN</scope>
    <scope>SUBCELLULAR LOCATION</scope>
    <scope>TISSUE SPECIFICITY</scope>
    <source>
        <strain>Sprague-Dawley</strain>
    </source>
</reference>
<reference key="2">
    <citation type="journal article" date="1998" name="J. Cell Biol.">
        <title>Small espin: a third actin-bundling protein and potential forked protein ortholog in brush border microvilli.</title>
        <authorList>
            <person name="Bartles J.R."/>
            <person name="Zheng L."/>
            <person name="Li A."/>
            <person name="Wierda A."/>
            <person name="Chen B."/>
        </authorList>
    </citation>
    <scope>NUCLEOTIDE SEQUENCE [MRNA] (ISOFORM 2)</scope>
    <scope>FUNCTION</scope>
    <scope>SUBUNIT</scope>
    <scope>INTERACTION WITH F-ACTIN</scope>
    <scope>SUBCELLULAR LOCATION</scope>
    <scope>TISSUE SPECIFICITY</scope>
    <scope>DEVELOPMENTAL STAGE</scope>
    <source>
        <strain>Sprague-Dawley</strain>
        <tissue>Kidney</tissue>
    </source>
</reference>
<reference key="3">
    <citation type="journal article" date="2003" name="J. Neurosci.">
        <title>Novel espin actin-bundling proteins are localized to Purkinje cell dendritic spines and bind the Src homology 3 adapter protein insulin receptor substrate p53.</title>
        <authorList>
            <person name="Sekerkova G."/>
            <person name="Loomis P.A."/>
            <person name="Changyaleket B."/>
            <person name="Zheng L."/>
            <person name="Eytan R."/>
            <person name="Chen B."/>
            <person name="Mugnaini E."/>
            <person name="Bartles J.R."/>
        </authorList>
    </citation>
    <scope>NUCLEOTIDE SEQUENCE [MRNA] (ISOFORMS 3; 4; 6 AND 8)</scope>
    <scope>TISSUE SPECIFICITY</scope>
    <scope>SUBCELLULAR LOCATION</scope>
    <scope>INTERACTION WITH BAIAP2</scope>
    <source>
        <strain>Sprague-Dawley</strain>
        <tissue>Cerebellum</tissue>
    </source>
</reference>
<reference key="4">
    <citation type="journal article" date="2004" name="J. Neurosci.">
        <title>Espins are multifunctional actin cytoskeletal regulatory proteins in the microvilli of chemosensory and mechanosensory cells.</title>
        <authorList>
            <person name="Sekerkova G."/>
            <person name="Zheng L."/>
            <person name="Loomis P.A."/>
            <person name="Changyaleket B."/>
            <person name="Whitlon D.S."/>
            <person name="Mugnaini E."/>
            <person name="Bartles J.R."/>
        </authorList>
    </citation>
    <scope>NUCLEOTIDE SEQUENCE [MRNA] (ISOFORMS 5 AND 7)</scope>
    <scope>TISSUE SPECIFICITY</scope>
    <source>
        <strain>Sprague-Dawley</strain>
    </source>
</reference>
<reference key="5">
    <citation type="journal article" date="2012" name="Nat. Commun.">
        <title>Quantitative maps of protein phosphorylation sites across 14 different rat organs and tissues.</title>
        <authorList>
            <person name="Lundby A."/>
            <person name="Secher A."/>
            <person name="Lage K."/>
            <person name="Nordsborg N.B."/>
            <person name="Dmytriyev A."/>
            <person name="Lundby C."/>
            <person name="Olsen J.V."/>
        </authorList>
    </citation>
    <scope>PHOSPHORYLATION [LARGE SCALE ANALYSIS] AT SER-337; SER-341; SER-400; SER-401; SER-497; SER-504; SER-531; SER-670; SER-674 AND SER-680</scope>
    <scope>IDENTIFICATION BY MASS SPECTROMETRY [LARGE SCALE ANALYSIS]</scope>
</reference>
<dbReference type="EMBL" id="U46007">
    <property type="protein sequence ID" value="AAC53594.1"/>
    <property type="molecule type" value="mRNA"/>
</dbReference>
<dbReference type="EMBL" id="AF076856">
    <property type="protein sequence ID" value="AAC69563.1"/>
    <property type="molecule type" value="mRNA"/>
</dbReference>
<dbReference type="EMBL" id="AF540946">
    <property type="protein sequence ID" value="AAO50330.1"/>
    <property type="molecule type" value="mRNA"/>
</dbReference>
<dbReference type="EMBL" id="AF540947">
    <property type="protein sequence ID" value="AAO50331.1"/>
    <property type="molecule type" value="mRNA"/>
</dbReference>
<dbReference type="EMBL" id="AF540948">
    <property type="protein sequence ID" value="AAO50332.1"/>
    <property type="molecule type" value="mRNA"/>
</dbReference>
<dbReference type="EMBL" id="AF540949">
    <property type="protein sequence ID" value="AAO50333.1"/>
    <property type="molecule type" value="mRNA"/>
</dbReference>
<dbReference type="EMBL" id="AY587568">
    <property type="protein sequence ID" value="AAT46470.1"/>
    <property type="molecule type" value="mRNA"/>
</dbReference>
<dbReference type="EMBL" id="AY587569">
    <property type="protein sequence ID" value="AAT46471.1"/>
    <property type="molecule type" value="mRNA"/>
</dbReference>
<dbReference type="RefSeq" id="XP_006239546.1">
    <property type="nucleotide sequence ID" value="XM_006239484.3"/>
</dbReference>
<dbReference type="SMR" id="Q63618"/>
<dbReference type="BioGRID" id="248563">
    <property type="interactions" value="2"/>
</dbReference>
<dbReference type="FunCoup" id="Q63618">
    <property type="interactions" value="44"/>
</dbReference>
<dbReference type="MINT" id="Q63618"/>
<dbReference type="STRING" id="10116.ENSRNOP00000039445"/>
<dbReference type="GlyGen" id="Q63618">
    <property type="glycosylation" value="2 sites"/>
</dbReference>
<dbReference type="iPTMnet" id="Q63618"/>
<dbReference type="PhosphoSitePlus" id="Q63618"/>
<dbReference type="PaxDb" id="10116-ENSRNOP00000039445"/>
<dbReference type="Ensembl" id="ENSRNOT00000013646.5">
    <molecule id="Q63618-2"/>
    <property type="protein sequence ID" value="ENSRNOP00000013645.3"/>
    <property type="gene ID" value="ENSRNOG00000010270.9"/>
</dbReference>
<dbReference type="UCSC" id="RGD:620652">
    <molecule id="Q63618-1"/>
    <property type="organism name" value="rat"/>
</dbReference>
<dbReference type="AGR" id="RGD:620652"/>
<dbReference type="RGD" id="620652">
    <property type="gene designation" value="Espn"/>
</dbReference>
<dbReference type="VEuPathDB" id="HostDB:ENSRNOG00000010270"/>
<dbReference type="eggNOG" id="KOG0504">
    <property type="taxonomic scope" value="Eukaryota"/>
</dbReference>
<dbReference type="GeneTree" id="ENSGT00940000160408"/>
<dbReference type="HOGENOM" id="CLU_086871_0_0_1"/>
<dbReference type="InParanoid" id="Q63618"/>
<dbReference type="OrthoDB" id="10261302at2759"/>
<dbReference type="PhylomeDB" id="Q63618"/>
<dbReference type="PRO" id="PR:Q63618"/>
<dbReference type="Proteomes" id="UP000002494">
    <property type="component" value="Chromosome 5"/>
</dbReference>
<dbReference type="Bgee" id="ENSRNOG00000010270">
    <property type="expression patterns" value="Expressed in jejunum and 13 other cell types or tissues"/>
</dbReference>
<dbReference type="ExpressionAtlas" id="Q63618">
    <property type="expression patterns" value="baseline and differential"/>
</dbReference>
<dbReference type="GO" id="GO:0015629">
    <property type="term" value="C:actin cytoskeleton"/>
    <property type="evidence" value="ECO:0000314"/>
    <property type="project" value="MGI"/>
</dbReference>
<dbReference type="GO" id="GO:0070161">
    <property type="term" value="C:anchoring junction"/>
    <property type="evidence" value="ECO:0007669"/>
    <property type="project" value="UniProtKB-SubCell"/>
</dbReference>
<dbReference type="GO" id="GO:0005903">
    <property type="term" value="C:brush border"/>
    <property type="evidence" value="ECO:0000314"/>
    <property type="project" value="UniProtKB"/>
</dbReference>
<dbReference type="GO" id="GO:0005737">
    <property type="term" value="C:cytoplasm"/>
    <property type="evidence" value="ECO:0000314"/>
    <property type="project" value="MGI"/>
</dbReference>
<dbReference type="GO" id="GO:0043197">
    <property type="term" value="C:dendritic spine"/>
    <property type="evidence" value="ECO:0007669"/>
    <property type="project" value="UniProtKB-SubCell"/>
</dbReference>
<dbReference type="GO" id="GO:0031941">
    <property type="term" value="C:filamentous actin"/>
    <property type="evidence" value="ECO:0000314"/>
    <property type="project" value="UniProtKB"/>
</dbReference>
<dbReference type="GO" id="GO:0005902">
    <property type="term" value="C:microvillus"/>
    <property type="evidence" value="ECO:0000314"/>
    <property type="project" value="MGI"/>
</dbReference>
<dbReference type="GO" id="GO:0032420">
    <property type="term" value="C:stereocilium"/>
    <property type="evidence" value="ECO:0000266"/>
    <property type="project" value="RGD"/>
</dbReference>
<dbReference type="GO" id="GO:0032421">
    <property type="term" value="C:stereocilium bundle"/>
    <property type="evidence" value="ECO:0000266"/>
    <property type="project" value="RGD"/>
</dbReference>
<dbReference type="GO" id="GO:0032426">
    <property type="term" value="C:stereocilium tip"/>
    <property type="evidence" value="ECO:0000250"/>
    <property type="project" value="UniProtKB"/>
</dbReference>
<dbReference type="GO" id="GO:0051015">
    <property type="term" value="F:actin filament binding"/>
    <property type="evidence" value="ECO:0000314"/>
    <property type="project" value="UniProtKB"/>
</dbReference>
<dbReference type="GO" id="GO:0017124">
    <property type="term" value="F:SH3 domain binding"/>
    <property type="evidence" value="ECO:0000353"/>
    <property type="project" value="UniProtKB"/>
</dbReference>
<dbReference type="GO" id="GO:0051017">
    <property type="term" value="P:actin filament bundle assembly"/>
    <property type="evidence" value="ECO:0000266"/>
    <property type="project" value="RGD"/>
</dbReference>
<dbReference type="GO" id="GO:0007015">
    <property type="term" value="P:actin filament organization"/>
    <property type="evidence" value="ECO:0000303"/>
    <property type="project" value="UniProtKB"/>
</dbReference>
<dbReference type="GO" id="GO:0007626">
    <property type="term" value="P:locomotory behavior"/>
    <property type="evidence" value="ECO:0000266"/>
    <property type="project" value="RGD"/>
</dbReference>
<dbReference type="GO" id="GO:0030034">
    <property type="term" value="P:microvillar actin bundle assembly"/>
    <property type="evidence" value="ECO:0000266"/>
    <property type="project" value="RGD"/>
</dbReference>
<dbReference type="GO" id="GO:0051494">
    <property type="term" value="P:negative regulation of cytoskeleton organization"/>
    <property type="evidence" value="ECO:0000266"/>
    <property type="project" value="RGD"/>
</dbReference>
<dbReference type="GO" id="GO:0030046">
    <property type="term" value="P:parallel actin filament bundle assembly"/>
    <property type="evidence" value="ECO:0000266"/>
    <property type="project" value="RGD"/>
</dbReference>
<dbReference type="GO" id="GO:0051491">
    <property type="term" value="P:positive regulation of filopodium assembly"/>
    <property type="evidence" value="ECO:0000266"/>
    <property type="project" value="RGD"/>
</dbReference>
<dbReference type="GO" id="GO:0007605">
    <property type="term" value="P:sensory perception of sound"/>
    <property type="evidence" value="ECO:0007669"/>
    <property type="project" value="UniProtKB-KW"/>
</dbReference>
<dbReference type="FunFam" id="1.25.40.20:FF:000174">
    <property type="entry name" value="Espin"/>
    <property type="match status" value="1"/>
</dbReference>
<dbReference type="Gene3D" id="1.25.40.20">
    <property type="entry name" value="Ankyrin repeat-containing domain"/>
    <property type="match status" value="3"/>
</dbReference>
<dbReference type="InterPro" id="IPR002110">
    <property type="entry name" value="Ankyrin_rpt"/>
</dbReference>
<dbReference type="InterPro" id="IPR036770">
    <property type="entry name" value="Ankyrin_rpt-contain_sf"/>
</dbReference>
<dbReference type="InterPro" id="IPR052420">
    <property type="entry name" value="Espin/Espin-like"/>
</dbReference>
<dbReference type="InterPro" id="IPR003124">
    <property type="entry name" value="WH2_dom"/>
</dbReference>
<dbReference type="PANTHER" id="PTHR24153">
    <property type="entry name" value="ESPIN"/>
    <property type="match status" value="1"/>
</dbReference>
<dbReference type="PANTHER" id="PTHR24153:SF14">
    <property type="entry name" value="ESPIN"/>
    <property type="match status" value="1"/>
</dbReference>
<dbReference type="Pfam" id="PF00023">
    <property type="entry name" value="Ank"/>
    <property type="match status" value="1"/>
</dbReference>
<dbReference type="Pfam" id="PF12796">
    <property type="entry name" value="Ank_2"/>
    <property type="match status" value="2"/>
</dbReference>
<dbReference type="Pfam" id="PF13637">
    <property type="entry name" value="Ank_4"/>
    <property type="match status" value="1"/>
</dbReference>
<dbReference type="Pfam" id="PF02205">
    <property type="entry name" value="WH2"/>
    <property type="match status" value="1"/>
</dbReference>
<dbReference type="SMART" id="SM00248">
    <property type="entry name" value="ANK"/>
    <property type="match status" value="8"/>
</dbReference>
<dbReference type="SMART" id="SM00246">
    <property type="entry name" value="WH2"/>
    <property type="match status" value="1"/>
</dbReference>
<dbReference type="SUPFAM" id="SSF48403">
    <property type="entry name" value="Ankyrin repeat"/>
    <property type="match status" value="1"/>
</dbReference>
<dbReference type="PROSITE" id="PS50297">
    <property type="entry name" value="ANK_REP_REGION"/>
    <property type="match status" value="1"/>
</dbReference>
<dbReference type="PROSITE" id="PS50088">
    <property type="entry name" value="ANK_REPEAT"/>
    <property type="match status" value="6"/>
</dbReference>
<dbReference type="PROSITE" id="PS51082">
    <property type="entry name" value="WH2"/>
    <property type="match status" value="1"/>
</dbReference>
<organism>
    <name type="scientific">Rattus norvegicus</name>
    <name type="common">Rat</name>
    <dbReference type="NCBI Taxonomy" id="10116"/>
    <lineage>
        <taxon>Eukaryota</taxon>
        <taxon>Metazoa</taxon>
        <taxon>Chordata</taxon>
        <taxon>Craniata</taxon>
        <taxon>Vertebrata</taxon>
        <taxon>Euteleostomi</taxon>
        <taxon>Mammalia</taxon>
        <taxon>Eutheria</taxon>
        <taxon>Euarchontoglires</taxon>
        <taxon>Glires</taxon>
        <taxon>Rodentia</taxon>
        <taxon>Myomorpha</taxon>
        <taxon>Muroidea</taxon>
        <taxon>Muridae</taxon>
        <taxon>Murinae</taxon>
        <taxon>Rattus</taxon>
    </lineage>
</organism>
<protein>
    <recommendedName>
        <fullName>Espin</fullName>
    </recommendedName>
    <alternativeName>
        <fullName>Ectoplasmic specialization protein</fullName>
    </alternativeName>
</protein>
<sequence length="837" mass="90569">MALEQAMQAARRGDLDVLRSLHAAGLLGPSLRDPLDALPVHHAARSGKLHCLRYLVEEVALPAVSRARNGATPAHDAAATGYLSCLQWLLTQGGCRVQEKDNSGATVLHLAARFGHPDVVNWLLYQGGANSAITTDTGALPIHYAAAKGDLPSMKLLVGHYPEGVNAQTNNGATPLYLACQEGHLEVTKYLVQECSADPHLRAQDGMTPLHAAAQMGHNPVLVWLVSFADVSFEQDHDGATAMHFAASRGHTKVLSWLLLHGAEISQDLWGGTPLHDAAENGELECCQILAVNGAGLDVRDHDGYTAADLADFNGHTHCSRYLRTVQTLSLEHRVLSRDPSMDLEAKQPDSGMSSPNTTMSVQPPNFDLGSPTSTLSNYDSCSSSHSSSKGQRSTRGARSSDLQSYMDMLNPEPRSKQGKPSSLPPPPPPSFPPPPPPGTQLPPPPPGYPAPNPPVGLHLDNIYMQTKNKLRHVEVDSLKKEPSSGDGYSGLRRQDSGLLRQDSELLLRHNTGLRRQDSDRKQRSFSKQPSTGDYYRQLGRSPGEPLAARPGMAHSEEAALLPGNHVHNGCSADSKASRELPPPPPPPPLPEALSSPPPAPPLPIEGAGAACGQRRSSSSTGSTKSFNMMSPTGDNSELLAEIKAGKSLKPTPQSKGLTTVFSGSGQPASQPESPQPAVSPGPSRARSPTPPASGPQPLLNGSIVPAPPATLAPGVHLDVEALIPTLDEQGRPIPEWKRQVMVRKLQQKMQEEEEQRRKEEEEEARLASLPAWRRDILRKKLEEEREQKRKEEERQKLEEIQRAKEQSEKLRTLGYDEAKLAPWQRQVILKKGEIPK</sequence>
<name>ESPN_RAT</name>
<comment type="function">
    <text evidence="2 9">Multifunctional actin-bundling protein. Plays a major role in regulating the organization, dimension, dynamics and signaling capacities of the actin filament-rich microvilli in the mechanosensory and chemosensory cells (PubMed:9763424). Required for the assembly and stabilization of the stereociliary parallel actin bundles. Plays a crucial role in the formation and maintenance of inner ear hair cell stereocilia. Involved in the elongation of actin in stereocilia. In extrastriolar hair cells, required for targeting MYO3B to stereocilia tips, and for regulation of stereocilia diameter and staircase formation (By similarity).</text>
</comment>
<comment type="subunit">
    <text evidence="1 2 6 8 9">Monomer (By similarity). Interacts with PFN2 (By similarity). Binds F-actin in a Ca(2+)-resistant fashion (PubMed:8799813, PubMed:9763424). Interacts (via N-terminal) with BAIAP2 (via SH3-domain) (PubMed:12598619). Interacts with MYO3A (via C-terminus). Interacts with MYO3B (via C-terminus) (By similarity).</text>
</comment>
<comment type="subcellular location">
    <subcellularLocation>
        <location>Cytoplasm</location>
        <location>Cytoskeleton</location>
    </subcellularLocation>
    <subcellularLocation>
        <location evidence="2">Cell projection</location>
        <location evidence="2">Stereocilium</location>
    </subcellularLocation>
    <subcellularLocation>
        <location>Cell projection</location>
        <location>Microvillus</location>
    </subcellularLocation>
    <subcellularLocation>
        <location>Cell junction</location>
    </subcellularLocation>
</comment>
<comment type="subcellular location">
    <molecule>Isoform 1</molecule>
    <subcellularLocation>
        <location>Cytoplasm</location>
        <location>Cytoskeleton</location>
    </subcellularLocation>
    <subcellularLocation>
        <location>Cell junction</location>
    </subcellularLocation>
    <text>Isoform 1 localizes to parallel actin bundles of ectoplasmic specializations between neighboring Sertoli cells and at sites where Sertoli cells contact the heads of elongate spermatids.</text>
</comment>
<comment type="subcellular location">
    <molecule>Isoform 2</molecule>
    <subcellularLocation>
        <location>Cytoplasm</location>
        <location>Cytoskeleton</location>
    </subcellularLocation>
    <subcellularLocation>
        <location>Cell projection</location>
        <location>Microvillus</location>
    </subcellularLocation>
    <text>Isoform 2 localizes to parallel actin bundles of brush border microvilli of small intestine and kidney.</text>
</comment>
<comment type="subcellular location">
    <molecule>Isoform 3</molecule>
    <subcellularLocation>
        <location>Cytoplasm</location>
        <location>Cytoskeleton</location>
    </subcellularLocation>
    <subcellularLocation>
        <location>Cell projection</location>
        <location>Dendritic spine</location>
    </subcellularLocation>
</comment>
<comment type="subcellular location">
    <molecule>Isoform 4</molecule>
    <subcellularLocation>
        <location>Cytoplasm</location>
        <location>Cytoskeleton</location>
    </subcellularLocation>
    <subcellularLocation>
        <location>Cell projection</location>
        <location>Dendritic spine</location>
    </subcellularLocation>
</comment>
<comment type="subcellular location">
    <molecule>Isoform 6</molecule>
    <subcellularLocation>
        <location>Cytoplasm</location>
        <location>Cytoskeleton</location>
    </subcellularLocation>
    <subcellularLocation>
        <location>Cell projection</location>
        <location>Dendritic spine</location>
    </subcellularLocation>
</comment>
<comment type="subcellular location">
    <molecule>Isoform 8</molecule>
    <subcellularLocation>
        <location>Cytoplasm</location>
        <location>Cytoskeleton</location>
    </subcellularLocation>
    <subcellularLocation>
        <location>Cell projection</location>
        <location>Dendritic spine</location>
    </subcellularLocation>
</comment>
<comment type="alternative products">
    <event type="alternative splicing"/>
    <isoform>
        <id>Q63618-1</id>
        <name>1</name>
        <name>large</name>
        <sequence type="displayed"/>
    </isoform>
    <isoform>
        <id>Q63618-2</id>
        <name>2</name>
        <name>small</name>
        <sequence type="described" ref="VSP_033741 VSP_033748 VSP_033750"/>
    </isoform>
    <isoform>
        <id>Q63618-3</id>
        <name>3</name>
        <name>Purkinje cell espin 1</name>
        <sequence type="described" ref="VSP_033744 VSP_033745"/>
    </isoform>
    <isoform>
        <id>Q63618-4</id>
        <name>4</name>
        <name>Purkinje cell espin 1+</name>
        <sequence type="described" ref="VSP_033744 VSP_033745 VSP_033749"/>
    </isoform>
    <isoform>
        <id>Q63618-5</id>
        <name>5</name>
        <name>3B</name>
        <sequence type="described" ref="VSP_033743 VSP_033747"/>
    </isoform>
    <isoform>
        <id>Q63618-6</id>
        <name>6</name>
        <name>Purkinje cell espin 2</name>
        <sequence type="described" ref="VSP_033744 VSP_033745 VSP_033746"/>
    </isoform>
    <isoform>
        <id>Q63618-7</id>
        <name>7</name>
        <name>3A</name>
        <sequence type="described" ref="VSP_033742"/>
    </isoform>
    <isoform>
        <id>Q63618-8</id>
        <name>8</name>
        <name>Purkinje cell espin 2+</name>
        <sequence type="described" ref="VSP_033744 VSP_033745 VSP_033746 VSP_033749"/>
    </isoform>
</comment>
<comment type="tissue specificity">
    <text evidence="6 7 8 9">Expressed at high concentration in the microvillar parallel actin bundle (PAB) of hair cells stereocilia in the cochlea and vestibular system. Detected also at high levels of a number of other sensory cell types, including taste receptor cells, solitary chemoreceptor cells, vomeronasal sensory neurons and Merkel cells. Isoform 1 is detected in testis. Isoforms 2 is detected in small intestine and kidney (at protein level). Isoforms 3, 4, 6 and 8 are expressed in Purkinje cells dendritic spines.</text>
</comment>
<comment type="developmental stage">
    <text evidence="9">Isoform 2 accumulates in the brush border during enterocyte differentiation and migration along the crypt-villus axis in adults.</text>
</comment>
<comment type="domain">
    <text evidence="2">The WH2-domain binds actin monomer and mediated actin bundle assembly.</text>
</comment>
<accession>Q63618</accession>
<accession>Q6GYS2</accession>
<accession>Q6GYS3</accession>
<accession>Q80ZB6</accession>
<accession>Q80ZB7</accession>
<accession>Q80ZB8</accession>
<accession>Q80ZB9</accession>
<accession>Q9Z2B4</accession>
<keyword id="KW-0009">Actin-binding</keyword>
<keyword id="KW-0025">Alternative splicing</keyword>
<keyword id="KW-0040">ANK repeat</keyword>
<keyword id="KW-0965">Cell junction</keyword>
<keyword id="KW-0966">Cell projection</keyword>
<keyword id="KW-0175">Coiled coil</keyword>
<keyword id="KW-0963">Cytoplasm</keyword>
<keyword id="KW-0206">Cytoskeleton</keyword>
<keyword id="KW-0903">Direct protein sequencing</keyword>
<keyword id="KW-1009">Hearing</keyword>
<keyword id="KW-0597">Phosphoprotein</keyword>
<keyword id="KW-1185">Reference proteome</keyword>
<keyword id="KW-0677">Repeat</keyword>
<keyword id="KW-0770">Synapse</keyword>
<evidence type="ECO:0000250" key="1"/>
<evidence type="ECO:0000250" key="2">
    <source>
        <dbReference type="UniProtKB" id="Q9ET47"/>
    </source>
</evidence>
<evidence type="ECO:0000255" key="3"/>
<evidence type="ECO:0000255" key="4">
    <source>
        <dbReference type="PROSITE-ProRule" id="PRU00406"/>
    </source>
</evidence>
<evidence type="ECO:0000256" key="5">
    <source>
        <dbReference type="SAM" id="MobiDB-lite"/>
    </source>
</evidence>
<evidence type="ECO:0000269" key="6">
    <source>
    </source>
</evidence>
<evidence type="ECO:0000269" key="7">
    <source>
    </source>
</evidence>
<evidence type="ECO:0000269" key="8">
    <source>
    </source>
</evidence>
<evidence type="ECO:0000269" key="9">
    <source>
    </source>
</evidence>
<evidence type="ECO:0000303" key="10">
    <source>
    </source>
</evidence>
<evidence type="ECO:0000303" key="11">
    <source>
    </source>
</evidence>
<evidence type="ECO:0000303" key="12">
    <source>
    </source>
</evidence>
<evidence type="ECO:0007744" key="13">
    <source>
    </source>
</evidence>
<feature type="chain" id="PRO_0000334668" description="Espin">
    <location>
        <begin position="1"/>
        <end position="837"/>
    </location>
</feature>
<feature type="repeat" description="ANK 1">
    <location>
        <begin position="1"/>
        <end position="31"/>
    </location>
</feature>
<feature type="repeat" description="ANK 2">
    <location>
        <begin position="35"/>
        <end position="66"/>
    </location>
</feature>
<feature type="repeat" description="ANK 3">
    <location>
        <begin position="69"/>
        <end position="99"/>
    </location>
</feature>
<feature type="repeat" description="ANK 4">
    <location>
        <begin position="103"/>
        <end position="132"/>
    </location>
</feature>
<feature type="repeat" description="ANK 5">
    <location>
        <begin position="137"/>
        <end position="167"/>
    </location>
</feature>
<feature type="repeat" description="ANK 6">
    <location>
        <begin position="171"/>
        <end position="201"/>
    </location>
</feature>
<feature type="repeat" description="ANK 7">
    <location>
        <begin position="205"/>
        <end position="235"/>
    </location>
</feature>
<feature type="repeat" description="ANK 8">
    <location>
        <begin position="238"/>
        <end position="267"/>
    </location>
</feature>
<feature type="repeat" description="ANK 9">
    <location>
        <begin position="270"/>
        <end position="299"/>
    </location>
</feature>
<feature type="domain" description="WH2" evidence="4">
    <location>
        <begin position="635"/>
        <end position="652"/>
    </location>
</feature>
<feature type="region of interest" description="Disordered" evidence="5">
    <location>
        <begin position="339"/>
        <end position="459"/>
    </location>
</feature>
<feature type="region of interest" description="Disordered" evidence="5">
    <location>
        <begin position="477"/>
        <end position="712"/>
    </location>
</feature>
<feature type="region of interest" description="Disordered" evidence="5">
    <location>
        <begin position="745"/>
        <end position="767"/>
    </location>
</feature>
<feature type="region of interest" description="Disordered" evidence="5">
    <location>
        <begin position="785"/>
        <end position="816"/>
    </location>
</feature>
<feature type="coiled-coil region" evidence="3">
    <location>
        <begin position="738"/>
        <end position="814"/>
    </location>
</feature>
<feature type="compositionally biased region" description="Basic and acidic residues" evidence="5">
    <location>
        <begin position="339"/>
        <end position="348"/>
    </location>
</feature>
<feature type="compositionally biased region" description="Polar residues" evidence="5">
    <location>
        <begin position="351"/>
        <end position="364"/>
    </location>
</feature>
<feature type="compositionally biased region" description="Low complexity" evidence="5">
    <location>
        <begin position="376"/>
        <end position="395"/>
    </location>
</feature>
<feature type="compositionally biased region" description="Pro residues" evidence="5">
    <location>
        <begin position="423"/>
        <end position="455"/>
    </location>
</feature>
<feature type="compositionally biased region" description="Pro residues" evidence="5">
    <location>
        <begin position="581"/>
        <end position="604"/>
    </location>
</feature>
<feature type="compositionally biased region" description="Low complexity" evidence="5">
    <location>
        <begin position="617"/>
        <end position="626"/>
    </location>
</feature>
<feature type="compositionally biased region" description="Polar residues" evidence="5">
    <location>
        <begin position="627"/>
        <end position="636"/>
    </location>
</feature>
<feature type="compositionally biased region" description="Polar residues" evidence="5">
    <location>
        <begin position="651"/>
        <end position="662"/>
    </location>
</feature>
<feature type="compositionally biased region" description="Low complexity" evidence="5">
    <location>
        <begin position="663"/>
        <end position="673"/>
    </location>
</feature>
<feature type="modified residue" description="Phosphoserine" evidence="13">
    <location>
        <position position="337"/>
    </location>
</feature>
<feature type="modified residue" description="Phosphoserine" evidence="13">
    <location>
        <position position="341"/>
    </location>
</feature>
<feature type="modified residue" description="Phosphoserine" evidence="13">
    <location>
        <position position="400"/>
    </location>
</feature>
<feature type="modified residue" description="Phosphoserine" evidence="13">
    <location>
        <position position="401"/>
    </location>
</feature>
<feature type="modified residue" description="Phosphoserine" evidence="13">
    <location>
        <position position="497"/>
    </location>
</feature>
<feature type="modified residue" description="Phosphoserine" evidence="13">
    <location>
        <position position="504"/>
    </location>
</feature>
<feature type="modified residue" description="Phosphoserine" evidence="13">
    <location>
        <position position="531"/>
    </location>
</feature>
<feature type="modified residue" description="Phosphoserine" evidence="2">
    <location>
        <position position="631"/>
    </location>
</feature>
<feature type="modified residue" description="Phosphoserine" evidence="13">
    <location>
        <position position="670"/>
    </location>
</feature>
<feature type="modified residue" description="Phosphoserine" evidence="13">
    <location>
        <position position="674"/>
    </location>
</feature>
<feature type="modified residue" description="Phosphoserine" evidence="13">
    <location>
        <position position="680"/>
    </location>
</feature>
<feature type="splice variant" id="VSP_033741" description="In isoform 2." evidence="12">
    <location>
        <begin position="1"/>
        <end position="609"/>
    </location>
</feature>
<feature type="splice variant" id="VSP_033742" description="In isoform 7." evidence="11">
    <location>
        <begin position="1"/>
        <end position="552"/>
    </location>
</feature>
<feature type="splice variant" id="VSP_033743" description="In isoform 5." evidence="11">
    <location>
        <begin position="1"/>
        <end position="522"/>
    </location>
</feature>
<feature type="splice variant" id="VSP_033744" description="In isoform 3, isoform 4, isoform 6 and isoform 8." evidence="10">
    <location>
        <begin position="1"/>
        <end position="326"/>
    </location>
</feature>
<feature type="splice variant" id="VSP_033745" description="In isoform 3, isoform 4, isoform 6 and isoform 8." evidence="10">
    <original>QTL</original>
    <variation>MGD</variation>
    <location>
        <begin position="327"/>
        <end position="329"/>
    </location>
</feature>
<feature type="splice variant" id="VSP_033746" description="In isoform 6 and isoform 8." evidence="10">
    <location>
        <begin position="483"/>
        <end position="558"/>
    </location>
</feature>
<feature type="splice variant" id="VSP_033747" description="In isoform 5." evidence="11">
    <original>QRSFSKQPSTGDYYRQLGRSPGEPLAARPGMAHSEE</original>
    <variation>MAHSEEVRVHQPAPAGCTGSNPVSHSSLSGPSAPPQ</variation>
    <location>
        <begin position="523"/>
        <end position="558"/>
    </location>
</feature>
<feature type="splice variant" id="VSP_033748" description="In isoform 2." evidence="12">
    <original>AACGQRRSSSSTG</original>
    <variation>MNSQGPLRGGRMP</variation>
    <location>
        <begin position="610"/>
        <end position="622"/>
    </location>
</feature>
<feature type="splice variant" id="VSP_033749" description="In isoform 4 and isoform 8." evidence="10">
    <original>G</original>
    <variation>GKVRILRHRK</variation>
    <location>
        <position position="622"/>
    </location>
</feature>
<feature type="splice variant" id="VSP_033750" description="In isoform 2." evidence="12">
    <original>Q</original>
    <variation>QVGTGRVPRPGSQCLPSAQPYRFSRQ</variation>
    <location>
        <position position="671"/>
    </location>
</feature>